<sequence>MKIDILTLFPEMFAPLEHSIVGKARKKGLLEINYHNFRENAEKSRHVDDEPYGGGQGMLLRAQPIFDAYDAIEKKQPRVILLDPAGRTFDQAYAEELAKEEELIFICGHYEGYDERIKMLVTDEISLGDYVLTGGELAAMTMIDATVRLIPEVIGKEASHTDDSFSSGLLEYPQYTRPYEYRGMVVPEVLMSGHHENIRKWRLYESLKKTYLRRPDLLEDYDFTEEETAFLDQIKESLERENL</sequence>
<reference key="1">
    <citation type="journal article" date="2007" name="J. Bacteriol.">
        <title>Genome-wide transcriptional changes in Streptococcus gordonii in response to competence signaling peptide.</title>
        <authorList>
            <person name="Vickerman M.M."/>
            <person name="Iobst S."/>
            <person name="Jesionowski A.M."/>
            <person name="Gill S.R."/>
        </authorList>
    </citation>
    <scope>NUCLEOTIDE SEQUENCE [LARGE SCALE GENOMIC DNA]</scope>
    <source>
        <strain>Challis / ATCC 35105 / BCRC 15272 / CH1 / DL1 / V288</strain>
    </source>
</reference>
<feature type="chain" id="PRO_1000082541" description="tRNA (guanine-N(1)-)-methyltransferase">
    <location>
        <begin position="1"/>
        <end position="243"/>
    </location>
</feature>
<feature type="binding site" evidence="1">
    <location>
        <position position="108"/>
    </location>
    <ligand>
        <name>S-adenosyl-L-methionine</name>
        <dbReference type="ChEBI" id="CHEBI:59789"/>
    </ligand>
</feature>
<feature type="binding site" evidence="1">
    <location>
        <begin position="127"/>
        <end position="132"/>
    </location>
    <ligand>
        <name>S-adenosyl-L-methionine</name>
        <dbReference type="ChEBI" id="CHEBI:59789"/>
    </ligand>
</feature>
<proteinExistence type="inferred from homology"/>
<protein>
    <recommendedName>
        <fullName evidence="1">tRNA (guanine-N(1)-)-methyltransferase</fullName>
        <ecNumber evidence="1">2.1.1.228</ecNumber>
    </recommendedName>
    <alternativeName>
        <fullName evidence="1">M1G-methyltransferase</fullName>
    </alternativeName>
    <alternativeName>
        <fullName evidence="1">tRNA [GM37] methyltransferase</fullName>
    </alternativeName>
</protein>
<keyword id="KW-0963">Cytoplasm</keyword>
<keyword id="KW-0489">Methyltransferase</keyword>
<keyword id="KW-1185">Reference proteome</keyword>
<keyword id="KW-0949">S-adenosyl-L-methionine</keyword>
<keyword id="KW-0808">Transferase</keyword>
<keyword id="KW-0819">tRNA processing</keyword>
<accession>A8AXT6</accession>
<dbReference type="EC" id="2.1.1.228" evidence="1"/>
<dbReference type="EMBL" id="CP000725">
    <property type="protein sequence ID" value="ABV09220.1"/>
    <property type="molecule type" value="Genomic_DNA"/>
</dbReference>
<dbReference type="RefSeq" id="WP_012000703.1">
    <property type="nucleotide sequence ID" value="NC_009785.1"/>
</dbReference>
<dbReference type="SMR" id="A8AXT6"/>
<dbReference type="STRING" id="467705.SGO_1315"/>
<dbReference type="KEGG" id="sgo:SGO_1315"/>
<dbReference type="eggNOG" id="COG0336">
    <property type="taxonomic scope" value="Bacteria"/>
</dbReference>
<dbReference type="HOGENOM" id="CLU_047363_0_1_9"/>
<dbReference type="Proteomes" id="UP000001131">
    <property type="component" value="Chromosome"/>
</dbReference>
<dbReference type="GO" id="GO:0005829">
    <property type="term" value="C:cytosol"/>
    <property type="evidence" value="ECO:0007669"/>
    <property type="project" value="TreeGrafter"/>
</dbReference>
<dbReference type="GO" id="GO:0052906">
    <property type="term" value="F:tRNA (guanine(37)-N1)-methyltransferase activity"/>
    <property type="evidence" value="ECO:0007669"/>
    <property type="project" value="UniProtKB-UniRule"/>
</dbReference>
<dbReference type="GO" id="GO:0002939">
    <property type="term" value="P:tRNA N1-guanine methylation"/>
    <property type="evidence" value="ECO:0007669"/>
    <property type="project" value="TreeGrafter"/>
</dbReference>
<dbReference type="CDD" id="cd18080">
    <property type="entry name" value="TrmD-like"/>
    <property type="match status" value="1"/>
</dbReference>
<dbReference type="FunFam" id="1.10.1270.20:FF:000001">
    <property type="entry name" value="tRNA (guanine-N(1)-)-methyltransferase"/>
    <property type="match status" value="1"/>
</dbReference>
<dbReference type="FunFam" id="3.40.1280.10:FF:000001">
    <property type="entry name" value="tRNA (guanine-N(1)-)-methyltransferase"/>
    <property type="match status" value="1"/>
</dbReference>
<dbReference type="Gene3D" id="3.40.1280.10">
    <property type="match status" value="1"/>
</dbReference>
<dbReference type="Gene3D" id="1.10.1270.20">
    <property type="entry name" value="tRNA(m1g37)methyltransferase, domain 2"/>
    <property type="match status" value="1"/>
</dbReference>
<dbReference type="HAMAP" id="MF_00605">
    <property type="entry name" value="TrmD"/>
    <property type="match status" value="1"/>
</dbReference>
<dbReference type="InterPro" id="IPR029028">
    <property type="entry name" value="Alpha/beta_knot_MTases"/>
</dbReference>
<dbReference type="InterPro" id="IPR023148">
    <property type="entry name" value="tRNA_m1G_MeTrfase_C_sf"/>
</dbReference>
<dbReference type="InterPro" id="IPR002649">
    <property type="entry name" value="tRNA_m1G_MeTrfase_TrmD"/>
</dbReference>
<dbReference type="InterPro" id="IPR029026">
    <property type="entry name" value="tRNA_m1G_MTases_N"/>
</dbReference>
<dbReference type="InterPro" id="IPR016009">
    <property type="entry name" value="tRNA_MeTrfase_TRMD/TRM10"/>
</dbReference>
<dbReference type="NCBIfam" id="NF000648">
    <property type="entry name" value="PRK00026.1"/>
    <property type="match status" value="1"/>
</dbReference>
<dbReference type="NCBIfam" id="TIGR00088">
    <property type="entry name" value="trmD"/>
    <property type="match status" value="1"/>
</dbReference>
<dbReference type="PANTHER" id="PTHR46417">
    <property type="entry name" value="TRNA (GUANINE-N(1)-)-METHYLTRANSFERASE"/>
    <property type="match status" value="1"/>
</dbReference>
<dbReference type="PANTHER" id="PTHR46417:SF1">
    <property type="entry name" value="TRNA (GUANINE-N(1)-)-METHYLTRANSFERASE"/>
    <property type="match status" value="1"/>
</dbReference>
<dbReference type="Pfam" id="PF01746">
    <property type="entry name" value="tRNA_m1G_MT"/>
    <property type="match status" value="1"/>
</dbReference>
<dbReference type="PIRSF" id="PIRSF000386">
    <property type="entry name" value="tRNA_mtase"/>
    <property type="match status" value="1"/>
</dbReference>
<dbReference type="SUPFAM" id="SSF75217">
    <property type="entry name" value="alpha/beta knot"/>
    <property type="match status" value="1"/>
</dbReference>
<evidence type="ECO:0000255" key="1">
    <source>
        <dbReference type="HAMAP-Rule" id="MF_00605"/>
    </source>
</evidence>
<gene>
    <name evidence="1" type="primary">trmD</name>
    <name type="ordered locus">SGO_1315</name>
</gene>
<name>TRMD_STRGC</name>
<organism>
    <name type="scientific">Streptococcus gordonii (strain Challis / ATCC 35105 / BCRC 15272 / CH1 / DL1 / V288)</name>
    <dbReference type="NCBI Taxonomy" id="467705"/>
    <lineage>
        <taxon>Bacteria</taxon>
        <taxon>Bacillati</taxon>
        <taxon>Bacillota</taxon>
        <taxon>Bacilli</taxon>
        <taxon>Lactobacillales</taxon>
        <taxon>Streptococcaceae</taxon>
        <taxon>Streptococcus</taxon>
    </lineage>
</organism>
<comment type="function">
    <text evidence="1">Specifically methylates guanosine-37 in various tRNAs.</text>
</comment>
<comment type="catalytic activity">
    <reaction evidence="1">
        <text>guanosine(37) in tRNA + S-adenosyl-L-methionine = N(1)-methylguanosine(37) in tRNA + S-adenosyl-L-homocysteine + H(+)</text>
        <dbReference type="Rhea" id="RHEA:36899"/>
        <dbReference type="Rhea" id="RHEA-COMP:10145"/>
        <dbReference type="Rhea" id="RHEA-COMP:10147"/>
        <dbReference type="ChEBI" id="CHEBI:15378"/>
        <dbReference type="ChEBI" id="CHEBI:57856"/>
        <dbReference type="ChEBI" id="CHEBI:59789"/>
        <dbReference type="ChEBI" id="CHEBI:73542"/>
        <dbReference type="ChEBI" id="CHEBI:74269"/>
        <dbReference type="EC" id="2.1.1.228"/>
    </reaction>
</comment>
<comment type="subunit">
    <text evidence="1">Homodimer.</text>
</comment>
<comment type="subcellular location">
    <subcellularLocation>
        <location evidence="1">Cytoplasm</location>
    </subcellularLocation>
</comment>
<comment type="similarity">
    <text evidence="1">Belongs to the RNA methyltransferase TrmD family.</text>
</comment>